<protein>
    <recommendedName>
        <fullName evidence="1">Holin-like protein CidA</fullName>
    </recommendedName>
</protein>
<name>CIDA_STAA9</name>
<evidence type="ECO:0000255" key="1">
    <source>
        <dbReference type="HAMAP-Rule" id="MF_01143"/>
    </source>
</evidence>
<proteinExistence type="inferred from homology"/>
<accession>A5IVW8</accession>
<gene>
    <name evidence="1" type="primary">cidA</name>
    <name type="ordered locus">SaurJH9_2564</name>
</gene>
<feature type="chain" id="PRO_1000085038" description="Holin-like protein CidA">
    <location>
        <begin position="1"/>
        <end position="131"/>
    </location>
</feature>
<feature type="transmembrane region" description="Helical" evidence="1">
    <location>
        <begin position="4"/>
        <end position="24"/>
    </location>
</feature>
<feature type="transmembrane region" description="Helical" evidence="1">
    <location>
        <begin position="30"/>
        <end position="50"/>
    </location>
</feature>
<feature type="transmembrane region" description="Helical" evidence="1">
    <location>
        <begin position="65"/>
        <end position="85"/>
    </location>
</feature>
<feature type="transmembrane region" description="Helical" evidence="1">
    <location>
        <begin position="88"/>
        <end position="108"/>
    </location>
</feature>
<keyword id="KW-1003">Cell membrane</keyword>
<keyword id="KW-0204">Cytolysis</keyword>
<keyword id="KW-0472">Membrane</keyword>
<keyword id="KW-0812">Transmembrane</keyword>
<keyword id="KW-1133">Transmembrane helix</keyword>
<comment type="function">
    <text evidence="1">Increases the activity of extracellular murein hydrolases possibly by mediating their export via hole formation. Inhibited by the antiholin-like proteins LrgAB. In an unstressed cell, the LrgAB products probably inhibit the function of the CidAB proteins. When a cell is stressed by the addition of antibiotics or by other factors in the environment, the CidAB proteins possibly oligomerize within the bacterial cell membrane, creating lesions that disrupt the proton motive force, which in turn results in loss of cell viability. These lesions are also hypothesized to regulate the subsequent cell lysis by either allowing the murein hydrolases access to the cell wall substrate and/or regulating their activity by a possible change in the cell wall pH that results from loss of membrane potential.</text>
</comment>
<comment type="subcellular location">
    <subcellularLocation>
        <location evidence="1">Cell membrane</location>
        <topology evidence="1">Multi-pass membrane protein</topology>
    </subcellularLocation>
</comment>
<comment type="similarity">
    <text evidence="1">Belongs to the CidA/LrgA family. CidA subfamily.</text>
</comment>
<reference key="1">
    <citation type="submission" date="2007-05" db="EMBL/GenBank/DDBJ databases">
        <title>Complete sequence of chromosome of Staphylococcus aureus subsp. aureus JH9.</title>
        <authorList>
            <consortium name="US DOE Joint Genome Institute"/>
            <person name="Copeland A."/>
            <person name="Lucas S."/>
            <person name="Lapidus A."/>
            <person name="Barry K."/>
            <person name="Detter J.C."/>
            <person name="Glavina del Rio T."/>
            <person name="Hammon N."/>
            <person name="Israni S."/>
            <person name="Pitluck S."/>
            <person name="Chain P."/>
            <person name="Malfatti S."/>
            <person name="Shin M."/>
            <person name="Vergez L."/>
            <person name="Schmutz J."/>
            <person name="Larimer F."/>
            <person name="Land M."/>
            <person name="Hauser L."/>
            <person name="Kyrpides N."/>
            <person name="Kim E."/>
            <person name="Tomasz A."/>
            <person name="Richardson P."/>
        </authorList>
    </citation>
    <scope>NUCLEOTIDE SEQUENCE [LARGE SCALE GENOMIC DNA]</scope>
    <source>
        <strain>JH9</strain>
    </source>
</reference>
<sequence length="131" mass="14730">MHKVQLIIKLLLQLGIIIVITYIGTEIQKIFHLPLAGSIVGLFLFYLLLQFKIVPLTWVEDGANFLLKTMVFFFIPSVVGIMDVASEITLNYILFFAVIIIGTCIVALSSGYIAEKMSVKHKHRKGVDAYE</sequence>
<organism>
    <name type="scientific">Staphylococcus aureus (strain JH9)</name>
    <dbReference type="NCBI Taxonomy" id="359786"/>
    <lineage>
        <taxon>Bacteria</taxon>
        <taxon>Bacillati</taxon>
        <taxon>Bacillota</taxon>
        <taxon>Bacilli</taxon>
        <taxon>Bacillales</taxon>
        <taxon>Staphylococcaceae</taxon>
        <taxon>Staphylococcus</taxon>
    </lineage>
</organism>
<dbReference type="EMBL" id="CP000703">
    <property type="protein sequence ID" value="ABQ50341.1"/>
    <property type="molecule type" value="Genomic_DNA"/>
</dbReference>
<dbReference type="RefSeq" id="WP_000549734.1">
    <property type="nucleotide sequence ID" value="NC_009487.1"/>
</dbReference>
<dbReference type="SMR" id="A5IVW8"/>
<dbReference type="KEGG" id="saj:SaurJH9_2564"/>
<dbReference type="HOGENOM" id="CLU_113736_2_1_9"/>
<dbReference type="GO" id="GO:0005886">
    <property type="term" value="C:plasma membrane"/>
    <property type="evidence" value="ECO:0007669"/>
    <property type="project" value="UniProtKB-SubCell"/>
</dbReference>
<dbReference type="GO" id="GO:0019835">
    <property type="term" value="P:cytolysis"/>
    <property type="evidence" value="ECO:0007669"/>
    <property type="project" value="UniProtKB-UniRule"/>
</dbReference>
<dbReference type="GO" id="GO:0031640">
    <property type="term" value="P:killing of cells of another organism"/>
    <property type="evidence" value="ECO:0007669"/>
    <property type="project" value="UniProtKB-KW"/>
</dbReference>
<dbReference type="GO" id="GO:0012501">
    <property type="term" value="P:programmed cell death"/>
    <property type="evidence" value="ECO:0007669"/>
    <property type="project" value="UniProtKB-UniRule"/>
</dbReference>
<dbReference type="HAMAP" id="MF_01143">
    <property type="entry name" value="CidA"/>
    <property type="match status" value="1"/>
</dbReference>
<dbReference type="InterPro" id="IPR023760">
    <property type="entry name" value="Holin-like_CidA"/>
</dbReference>
<dbReference type="InterPro" id="IPR005538">
    <property type="entry name" value="LrgA/CidA"/>
</dbReference>
<dbReference type="PANTHER" id="PTHR33931:SF2">
    <property type="entry name" value="HOLIN-LIKE PROTEIN CIDA"/>
    <property type="match status" value="1"/>
</dbReference>
<dbReference type="PANTHER" id="PTHR33931">
    <property type="entry name" value="HOLIN-LIKE PROTEIN CIDA-RELATED"/>
    <property type="match status" value="1"/>
</dbReference>
<dbReference type="Pfam" id="PF03788">
    <property type="entry name" value="LrgA"/>
    <property type="match status" value="1"/>
</dbReference>